<keyword id="KW-0963">Cytoplasm</keyword>
<keyword id="KW-0328">Glycosyltransferase</keyword>
<keyword id="KW-0660">Purine salvage</keyword>
<keyword id="KW-1185">Reference proteome</keyword>
<keyword id="KW-0808">Transferase</keyword>
<protein>
    <recommendedName>
        <fullName evidence="1">Adenine phosphoribosyltransferase</fullName>
        <shortName evidence="1">APRT</shortName>
        <ecNumber evidence="1">2.4.2.7</ecNumber>
    </recommendedName>
</protein>
<gene>
    <name evidence="1" type="primary">apt</name>
    <name type="ordered locus">EF_1687</name>
</gene>
<sequence length="170" mass="18773">MDLRDYIASIPDYPEKGIVFRDISPLMANGDAYREATKQIVDYAKEKRIDMVVGPEARGFIVGCPVAYELGVGFAPVRKKGKLPRETIEVTYDLEYGSDTLTLHKDAITPGQRVLICDDLLATGGTIKATIELVEQLGGIVVGCAFLIELMDLHGRDKIDGYDIVTLMEY</sequence>
<proteinExistence type="inferred from homology"/>
<dbReference type="EC" id="2.4.2.7" evidence="1"/>
<dbReference type="EMBL" id="AE016830">
    <property type="protein sequence ID" value="AAO81465.1"/>
    <property type="molecule type" value="Genomic_DNA"/>
</dbReference>
<dbReference type="RefSeq" id="NP_815395.1">
    <property type="nucleotide sequence ID" value="NC_004668.1"/>
</dbReference>
<dbReference type="RefSeq" id="WP_002357441.1">
    <property type="nucleotide sequence ID" value="NZ_KE136528.1"/>
</dbReference>
<dbReference type="SMR" id="Q834G6"/>
<dbReference type="STRING" id="226185.EF_1687"/>
<dbReference type="EnsemblBacteria" id="AAO81465">
    <property type="protein sequence ID" value="AAO81465"/>
    <property type="gene ID" value="EF_1687"/>
</dbReference>
<dbReference type="KEGG" id="efa:EF1687"/>
<dbReference type="PATRIC" id="fig|226185.45.peg.1823"/>
<dbReference type="eggNOG" id="COG0503">
    <property type="taxonomic scope" value="Bacteria"/>
</dbReference>
<dbReference type="HOGENOM" id="CLU_063339_3_0_9"/>
<dbReference type="UniPathway" id="UPA00588">
    <property type="reaction ID" value="UER00646"/>
</dbReference>
<dbReference type="Proteomes" id="UP000001415">
    <property type="component" value="Chromosome"/>
</dbReference>
<dbReference type="GO" id="GO:0005737">
    <property type="term" value="C:cytoplasm"/>
    <property type="evidence" value="ECO:0007669"/>
    <property type="project" value="UniProtKB-SubCell"/>
</dbReference>
<dbReference type="GO" id="GO:0002055">
    <property type="term" value="F:adenine binding"/>
    <property type="evidence" value="ECO:0007669"/>
    <property type="project" value="TreeGrafter"/>
</dbReference>
<dbReference type="GO" id="GO:0003999">
    <property type="term" value="F:adenine phosphoribosyltransferase activity"/>
    <property type="evidence" value="ECO:0007669"/>
    <property type="project" value="UniProtKB-UniRule"/>
</dbReference>
<dbReference type="GO" id="GO:0016208">
    <property type="term" value="F:AMP binding"/>
    <property type="evidence" value="ECO:0007669"/>
    <property type="project" value="TreeGrafter"/>
</dbReference>
<dbReference type="GO" id="GO:0006168">
    <property type="term" value="P:adenine salvage"/>
    <property type="evidence" value="ECO:0007669"/>
    <property type="project" value="InterPro"/>
</dbReference>
<dbReference type="GO" id="GO:0044209">
    <property type="term" value="P:AMP salvage"/>
    <property type="evidence" value="ECO:0007669"/>
    <property type="project" value="UniProtKB-UniRule"/>
</dbReference>
<dbReference type="GO" id="GO:0006166">
    <property type="term" value="P:purine ribonucleoside salvage"/>
    <property type="evidence" value="ECO:0007669"/>
    <property type="project" value="UniProtKB-KW"/>
</dbReference>
<dbReference type="CDD" id="cd06223">
    <property type="entry name" value="PRTases_typeI"/>
    <property type="match status" value="1"/>
</dbReference>
<dbReference type="FunFam" id="3.40.50.2020:FF:000004">
    <property type="entry name" value="Adenine phosphoribosyltransferase"/>
    <property type="match status" value="1"/>
</dbReference>
<dbReference type="Gene3D" id="3.40.50.2020">
    <property type="match status" value="1"/>
</dbReference>
<dbReference type="HAMAP" id="MF_00004">
    <property type="entry name" value="Aden_phosphoribosyltr"/>
    <property type="match status" value="1"/>
</dbReference>
<dbReference type="InterPro" id="IPR005764">
    <property type="entry name" value="Ade_phspho_trans"/>
</dbReference>
<dbReference type="InterPro" id="IPR000836">
    <property type="entry name" value="PRibTrfase_dom"/>
</dbReference>
<dbReference type="InterPro" id="IPR029057">
    <property type="entry name" value="PRTase-like"/>
</dbReference>
<dbReference type="InterPro" id="IPR050054">
    <property type="entry name" value="UPRTase/APRTase"/>
</dbReference>
<dbReference type="NCBIfam" id="TIGR01090">
    <property type="entry name" value="apt"/>
    <property type="match status" value="1"/>
</dbReference>
<dbReference type="NCBIfam" id="NF002633">
    <property type="entry name" value="PRK02304.1-2"/>
    <property type="match status" value="1"/>
</dbReference>
<dbReference type="NCBIfam" id="NF002634">
    <property type="entry name" value="PRK02304.1-3"/>
    <property type="match status" value="1"/>
</dbReference>
<dbReference type="NCBIfam" id="NF002636">
    <property type="entry name" value="PRK02304.1-5"/>
    <property type="match status" value="1"/>
</dbReference>
<dbReference type="PANTHER" id="PTHR32315">
    <property type="entry name" value="ADENINE PHOSPHORIBOSYLTRANSFERASE"/>
    <property type="match status" value="1"/>
</dbReference>
<dbReference type="PANTHER" id="PTHR32315:SF3">
    <property type="entry name" value="ADENINE PHOSPHORIBOSYLTRANSFERASE"/>
    <property type="match status" value="1"/>
</dbReference>
<dbReference type="Pfam" id="PF00156">
    <property type="entry name" value="Pribosyltran"/>
    <property type="match status" value="1"/>
</dbReference>
<dbReference type="SUPFAM" id="SSF53271">
    <property type="entry name" value="PRTase-like"/>
    <property type="match status" value="1"/>
</dbReference>
<dbReference type="PROSITE" id="PS00103">
    <property type="entry name" value="PUR_PYR_PR_TRANSFER"/>
    <property type="match status" value="1"/>
</dbReference>
<reference key="1">
    <citation type="journal article" date="2003" name="Science">
        <title>Role of mobile DNA in the evolution of vancomycin-resistant Enterococcus faecalis.</title>
        <authorList>
            <person name="Paulsen I.T."/>
            <person name="Banerjei L."/>
            <person name="Myers G.S.A."/>
            <person name="Nelson K.E."/>
            <person name="Seshadri R."/>
            <person name="Read T.D."/>
            <person name="Fouts D.E."/>
            <person name="Eisen J.A."/>
            <person name="Gill S.R."/>
            <person name="Heidelberg J.F."/>
            <person name="Tettelin H."/>
            <person name="Dodson R.J."/>
            <person name="Umayam L.A."/>
            <person name="Brinkac L.M."/>
            <person name="Beanan M.J."/>
            <person name="Daugherty S.C."/>
            <person name="DeBoy R.T."/>
            <person name="Durkin S.A."/>
            <person name="Kolonay J.F."/>
            <person name="Madupu R."/>
            <person name="Nelson W.C."/>
            <person name="Vamathevan J.J."/>
            <person name="Tran B."/>
            <person name="Upton J."/>
            <person name="Hansen T."/>
            <person name="Shetty J."/>
            <person name="Khouri H.M."/>
            <person name="Utterback T.R."/>
            <person name="Radune D."/>
            <person name="Ketchum K.A."/>
            <person name="Dougherty B.A."/>
            <person name="Fraser C.M."/>
        </authorList>
    </citation>
    <scope>NUCLEOTIDE SEQUENCE [LARGE SCALE GENOMIC DNA]</scope>
    <source>
        <strain>ATCC 700802 / V583</strain>
    </source>
</reference>
<feature type="chain" id="PRO_0000149382" description="Adenine phosphoribosyltransferase">
    <location>
        <begin position="1"/>
        <end position="170"/>
    </location>
</feature>
<name>APT_ENTFA</name>
<organism>
    <name type="scientific">Enterococcus faecalis (strain ATCC 700802 / V583)</name>
    <dbReference type="NCBI Taxonomy" id="226185"/>
    <lineage>
        <taxon>Bacteria</taxon>
        <taxon>Bacillati</taxon>
        <taxon>Bacillota</taxon>
        <taxon>Bacilli</taxon>
        <taxon>Lactobacillales</taxon>
        <taxon>Enterococcaceae</taxon>
        <taxon>Enterococcus</taxon>
    </lineage>
</organism>
<comment type="function">
    <text evidence="1">Catalyzes a salvage reaction resulting in the formation of AMP, that is energically less costly than de novo synthesis.</text>
</comment>
<comment type="catalytic activity">
    <reaction evidence="1">
        <text>AMP + diphosphate = 5-phospho-alpha-D-ribose 1-diphosphate + adenine</text>
        <dbReference type="Rhea" id="RHEA:16609"/>
        <dbReference type="ChEBI" id="CHEBI:16708"/>
        <dbReference type="ChEBI" id="CHEBI:33019"/>
        <dbReference type="ChEBI" id="CHEBI:58017"/>
        <dbReference type="ChEBI" id="CHEBI:456215"/>
        <dbReference type="EC" id="2.4.2.7"/>
    </reaction>
</comment>
<comment type="pathway">
    <text evidence="1">Purine metabolism; AMP biosynthesis via salvage pathway; AMP from adenine: step 1/1.</text>
</comment>
<comment type="subunit">
    <text evidence="1">Homodimer.</text>
</comment>
<comment type="subcellular location">
    <subcellularLocation>
        <location evidence="1">Cytoplasm</location>
    </subcellularLocation>
</comment>
<comment type="similarity">
    <text evidence="1">Belongs to the purine/pyrimidine phosphoribosyltransferase family.</text>
</comment>
<accession>Q834G6</accession>
<evidence type="ECO:0000255" key="1">
    <source>
        <dbReference type="HAMAP-Rule" id="MF_00004"/>
    </source>
</evidence>